<feature type="chain" id="PRO_0000085587" description="Sulfocyanin">
    <location>
        <begin position="1"/>
        <end position="199"/>
    </location>
</feature>
<feature type="transmembrane region" description="Helical; Signal-anchor for type II membrane protein" evidence="2">
    <location>
        <begin position="7"/>
        <end position="27"/>
    </location>
</feature>
<feature type="domain" description="Plastocyanin-like">
    <location>
        <begin position="79"/>
        <end position="188"/>
    </location>
</feature>
<feature type="binding site" evidence="1">
    <location>
        <position position="110"/>
    </location>
    <ligand>
        <name>Cu cation</name>
        <dbReference type="ChEBI" id="CHEBI:23378"/>
    </ligand>
</feature>
<feature type="binding site" evidence="1">
    <location>
        <position position="171"/>
    </location>
    <ligand>
        <name>Cu cation</name>
        <dbReference type="ChEBI" id="CHEBI:23378"/>
    </ligand>
</feature>
<feature type="binding site" evidence="1">
    <location>
        <position position="176"/>
    </location>
    <ligand>
        <name>Cu cation</name>
        <dbReference type="ChEBI" id="CHEBI:23378"/>
    </ligand>
</feature>
<feature type="binding site" evidence="1">
    <location>
        <position position="181"/>
    </location>
    <ligand>
        <name>Cu cation</name>
        <dbReference type="ChEBI" id="CHEBI:23378"/>
    </ligand>
</feature>
<sequence>MKAQSSVLPVVVGILVVIIAVAVGVYVYNQYVMLSSPSASSSTGTSTGPSKISIPYSSSNKTVFLTIVVESSSNVNQFNFNGTSSGSLVIYIPAGSTVIVKFINQESLPHNLVLLQNSTPTPQSPEISSDGKIIDIVGATTSNYDVNGISGGASAEGVWGPISAGDYMLVCGILGHAASGMWAVLVASNNVTAPYAVID</sequence>
<reference key="1">
    <citation type="journal article" date="1995" name="J. Mol. Biol.">
        <title>New archaebacterial genes coding for redox proteins: implications for the evolution of aerobic metabolism.</title>
        <authorList>
            <person name="Castresana J."/>
            <person name="Luebben M."/>
            <person name="Saraste M."/>
        </authorList>
    </citation>
    <scope>NUCLEOTIDE SEQUENCE [GENOMIC DNA]</scope>
    <source>
        <strain>ATCC 33909 / DSM 639 / JCM 8929 / NBRC 15157 / NCIMB 11770</strain>
    </source>
</reference>
<reference key="2">
    <citation type="journal article" date="2005" name="J. Bacteriol.">
        <title>The genome of Sulfolobus acidocaldarius, a model organism of the Crenarchaeota.</title>
        <authorList>
            <person name="Chen L."/>
            <person name="Bruegger K."/>
            <person name="Skovgaard M."/>
            <person name="Redder P."/>
            <person name="She Q."/>
            <person name="Torarinsson E."/>
            <person name="Greve B."/>
            <person name="Awayez M."/>
            <person name="Zibat A."/>
            <person name="Klenk H.-P."/>
            <person name="Garrett R.A."/>
        </authorList>
    </citation>
    <scope>NUCLEOTIDE SEQUENCE [LARGE SCALE GENOMIC DNA]</scope>
    <source>
        <strain>ATCC 33909 / DSM 639 / JCM 8929 / NBRC 15157 / NCIMB 11770</strain>
    </source>
</reference>
<organism>
    <name type="scientific">Sulfolobus acidocaldarius (strain ATCC 33909 / DSM 639 / JCM 8929 / NBRC 15157 / NCIMB 11770)</name>
    <dbReference type="NCBI Taxonomy" id="330779"/>
    <lineage>
        <taxon>Archaea</taxon>
        <taxon>Thermoproteota</taxon>
        <taxon>Thermoprotei</taxon>
        <taxon>Sulfolobales</taxon>
        <taxon>Sulfolobaceae</taxon>
        <taxon>Sulfolobus</taxon>
    </lineage>
</organism>
<proteinExistence type="inferred from homology"/>
<dbReference type="EMBL" id="Z48338">
    <property type="protein sequence ID" value="CAA88317.1"/>
    <property type="molecule type" value="Genomic_DNA"/>
</dbReference>
<dbReference type="EMBL" id="CP000077">
    <property type="protein sequence ID" value="AAY81548.1"/>
    <property type="status" value="ALT_INIT"/>
    <property type="molecule type" value="Genomic_DNA"/>
</dbReference>
<dbReference type="PIR" id="S56155">
    <property type="entry name" value="S56155"/>
</dbReference>
<dbReference type="RefSeq" id="WP_015385793.1">
    <property type="nucleotide sequence ID" value="NC_007181.1"/>
</dbReference>
<dbReference type="SMR" id="Q53765"/>
<dbReference type="STRING" id="330779.Saci_2262"/>
<dbReference type="GeneID" id="14552775"/>
<dbReference type="KEGG" id="sai:Saci_2262"/>
<dbReference type="PATRIC" id="fig|330779.12.peg.2271"/>
<dbReference type="eggNOG" id="arCOG03700">
    <property type="taxonomic scope" value="Archaea"/>
</dbReference>
<dbReference type="HOGENOM" id="CLU_105306_1_0_2"/>
<dbReference type="BioCyc" id="MetaCyc:MONOMER-21011"/>
<dbReference type="Proteomes" id="UP000001018">
    <property type="component" value="Chromosome"/>
</dbReference>
<dbReference type="GO" id="GO:0005886">
    <property type="term" value="C:plasma membrane"/>
    <property type="evidence" value="ECO:0007669"/>
    <property type="project" value="UniProtKB-SubCell"/>
</dbReference>
<dbReference type="GO" id="GO:0005507">
    <property type="term" value="F:copper ion binding"/>
    <property type="evidence" value="ECO:0007669"/>
    <property type="project" value="InterPro"/>
</dbReference>
<dbReference type="Gene3D" id="2.60.40.420">
    <property type="entry name" value="Cupredoxins - blue copper proteins"/>
    <property type="match status" value="1"/>
</dbReference>
<dbReference type="InterPro" id="IPR033138">
    <property type="entry name" value="Cu_oxidase_CS"/>
</dbReference>
<dbReference type="InterPro" id="IPR008972">
    <property type="entry name" value="Cupredoxin"/>
</dbReference>
<dbReference type="InterPro" id="IPR010532">
    <property type="entry name" value="SoxE"/>
</dbReference>
<dbReference type="InterPro" id="IPR049544">
    <property type="entry name" value="SoxE-like_C"/>
</dbReference>
<dbReference type="InterPro" id="IPR055193">
    <property type="entry name" value="SoxE_N"/>
</dbReference>
<dbReference type="NCBIfam" id="TIGR03094">
    <property type="entry name" value="sulfo_cyanin"/>
    <property type="match status" value="1"/>
</dbReference>
<dbReference type="Pfam" id="PF06525">
    <property type="entry name" value="SoxE"/>
    <property type="match status" value="1"/>
</dbReference>
<dbReference type="Pfam" id="PF22852">
    <property type="entry name" value="SoxE_N"/>
    <property type="match status" value="1"/>
</dbReference>
<dbReference type="PIRSF" id="PIRSF022145">
    <property type="entry name" value="Sulfocyanin"/>
    <property type="match status" value="1"/>
</dbReference>
<dbReference type="SUPFAM" id="SSF49503">
    <property type="entry name" value="Cupredoxins"/>
    <property type="match status" value="1"/>
</dbReference>
<dbReference type="PROSITE" id="PS00079">
    <property type="entry name" value="MULTICOPPER_OXIDASE1"/>
    <property type="match status" value="1"/>
</dbReference>
<accession>Q53765</accession>
<accession>Q4J6N4</accession>
<evidence type="ECO:0000250" key="1"/>
<evidence type="ECO:0000255" key="2"/>
<evidence type="ECO:0000305" key="3"/>
<comment type="function">
    <text>The 4 redox proteins SoxE, SoxF, SoxG and SoxH probably form part of a membrane respiratory complex together with SoxM, a catalytic subunit of cytochrome oxidase.</text>
</comment>
<comment type="subcellular location">
    <subcellularLocation>
        <location evidence="3">Cell membrane</location>
        <topology evidence="3">Single-pass type II membrane protein</topology>
    </subcellularLocation>
</comment>
<comment type="similarity">
    <text evidence="3">Belongs to the multicopper oxidase family.</text>
</comment>
<comment type="sequence caution" evidence="3">
    <conflict type="erroneous initiation">
        <sequence resource="EMBL-CDS" id="AAY81548"/>
    </conflict>
</comment>
<name>SOXE_SULAC</name>
<gene>
    <name type="primary">soxE</name>
    <name type="ordered locus">Saci_2262</name>
</gene>
<protein>
    <recommendedName>
        <fullName>Sulfocyanin</fullName>
    </recommendedName>
    <alternativeName>
        <fullName>Blue copper protein</fullName>
    </alternativeName>
</protein>
<keyword id="KW-1003">Cell membrane</keyword>
<keyword id="KW-0186">Copper</keyword>
<keyword id="KW-0249">Electron transport</keyword>
<keyword id="KW-0472">Membrane</keyword>
<keyword id="KW-0479">Metal-binding</keyword>
<keyword id="KW-1185">Reference proteome</keyword>
<keyword id="KW-0679">Respiratory chain</keyword>
<keyword id="KW-0735">Signal-anchor</keyword>
<keyword id="KW-0812">Transmembrane</keyword>
<keyword id="KW-1133">Transmembrane helix</keyword>
<keyword id="KW-0813">Transport</keyword>